<reference key="1">
    <citation type="submission" date="2007-11" db="EMBL/GenBank/DDBJ databases">
        <title>Complete sequence of Delftia acidovorans DSM 14801 / SPH-1.</title>
        <authorList>
            <person name="Copeland A."/>
            <person name="Lucas S."/>
            <person name="Lapidus A."/>
            <person name="Barry K."/>
            <person name="Glavina del Rio T."/>
            <person name="Dalin E."/>
            <person name="Tice H."/>
            <person name="Pitluck S."/>
            <person name="Lowry S."/>
            <person name="Clum A."/>
            <person name="Schmutz J."/>
            <person name="Larimer F."/>
            <person name="Land M."/>
            <person name="Hauser L."/>
            <person name="Kyrpides N."/>
            <person name="Kim E."/>
            <person name="Schleheck D."/>
            <person name="Richardson P."/>
        </authorList>
    </citation>
    <scope>NUCLEOTIDE SEQUENCE [LARGE SCALE GENOMIC DNA]</scope>
    <source>
        <strain>DSM 14801 / SPH-1</strain>
    </source>
</reference>
<proteinExistence type="inferred from homology"/>
<evidence type="ECO:0000255" key="1">
    <source>
        <dbReference type="HAMAP-Rule" id="MF_00739"/>
    </source>
</evidence>
<accession>A9BUC7</accession>
<keyword id="KW-0963">Cytoplasm</keyword>
<keyword id="KW-0378">Hydrolase</keyword>
<keyword id="KW-1185">Reference proteome</keyword>
<comment type="catalytic activity">
    <reaction evidence="1">
        <text>urea + 2 H2O + H(+) = hydrogencarbonate + 2 NH4(+)</text>
        <dbReference type="Rhea" id="RHEA:20557"/>
        <dbReference type="ChEBI" id="CHEBI:15377"/>
        <dbReference type="ChEBI" id="CHEBI:15378"/>
        <dbReference type="ChEBI" id="CHEBI:16199"/>
        <dbReference type="ChEBI" id="CHEBI:17544"/>
        <dbReference type="ChEBI" id="CHEBI:28938"/>
        <dbReference type="EC" id="3.5.1.5"/>
    </reaction>
</comment>
<comment type="pathway">
    <text evidence="1">Nitrogen metabolism; urea degradation; CO(2) and NH(3) from urea (urease route): step 1/1.</text>
</comment>
<comment type="subunit">
    <text evidence="1">Heterotrimer of UreA (gamma), UreB (beta) and UreC (alpha) subunits. Three heterotrimers associate to form the active enzyme.</text>
</comment>
<comment type="subcellular location">
    <subcellularLocation>
        <location evidence="1">Cytoplasm</location>
    </subcellularLocation>
</comment>
<comment type="similarity">
    <text evidence="1">Belongs to the urease gamma subunit family.</text>
</comment>
<sequence length="100" mass="11058">MELTPREKDKLLLFTAALVAERRKARGLKLNYPEAVALISAAVLEWARDGRTVAELMHLGTTVLTRADVMEGIPEMIPDIQVEATFPDGTKLVTVHHPIV</sequence>
<dbReference type="EC" id="3.5.1.5" evidence="1"/>
<dbReference type="EMBL" id="CP000884">
    <property type="protein sequence ID" value="ABX33830.1"/>
    <property type="molecule type" value="Genomic_DNA"/>
</dbReference>
<dbReference type="RefSeq" id="WP_012203116.1">
    <property type="nucleotide sequence ID" value="NC_010002.1"/>
</dbReference>
<dbReference type="SMR" id="A9BUC7"/>
<dbReference type="STRING" id="398578.Daci_1185"/>
<dbReference type="KEGG" id="dac:Daci_1185"/>
<dbReference type="eggNOG" id="COG0831">
    <property type="taxonomic scope" value="Bacteria"/>
</dbReference>
<dbReference type="HOGENOM" id="CLU_145825_1_0_4"/>
<dbReference type="UniPathway" id="UPA00258">
    <property type="reaction ID" value="UER00370"/>
</dbReference>
<dbReference type="Proteomes" id="UP000000784">
    <property type="component" value="Chromosome"/>
</dbReference>
<dbReference type="GO" id="GO:0005737">
    <property type="term" value="C:cytoplasm"/>
    <property type="evidence" value="ECO:0007669"/>
    <property type="project" value="UniProtKB-SubCell"/>
</dbReference>
<dbReference type="GO" id="GO:0016151">
    <property type="term" value="F:nickel cation binding"/>
    <property type="evidence" value="ECO:0007669"/>
    <property type="project" value="InterPro"/>
</dbReference>
<dbReference type="GO" id="GO:0009039">
    <property type="term" value="F:urease activity"/>
    <property type="evidence" value="ECO:0007669"/>
    <property type="project" value="UniProtKB-UniRule"/>
</dbReference>
<dbReference type="GO" id="GO:0043419">
    <property type="term" value="P:urea catabolic process"/>
    <property type="evidence" value="ECO:0007669"/>
    <property type="project" value="UniProtKB-UniRule"/>
</dbReference>
<dbReference type="CDD" id="cd00390">
    <property type="entry name" value="Urease_gamma"/>
    <property type="match status" value="1"/>
</dbReference>
<dbReference type="Gene3D" id="3.30.280.10">
    <property type="entry name" value="Urease, gamma-like subunit"/>
    <property type="match status" value="1"/>
</dbReference>
<dbReference type="HAMAP" id="MF_00739">
    <property type="entry name" value="Urease_gamma"/>
    <property type="match status" value="1"/>
</dbReference>
<dbReference type="InterPro" id="IPR012010">
    <property type="entry name" value="Urease_gamma"/>
</dbReference>
<dbReference type="InterPro" id="IPR002026">
    <property type="entry name" value="Urease_gamma/gamma-beta_su"/>
</dbReference>
<dbReference type="InterPro" id="IPR036463">
    <property type="entry name" value="Urease_gamma_sf"/>
</dbReference>
<dbReference type="InterPro" id="IPR050069">
    <property type="entry name" value="Urease_subunit"/>
</dbReference>
<dbReference type="NCBIfam" id="NF009712">
    <property type="entry name" value="PRK13241.1"/>
    <property type="match status" value="1"/>
</dbReference>
<dbReference type="NCBIfam" id="TIGR00193">
    <property type="entry name" value="urease_gam"/>
    <property type="match status" value="1"/>
</dbReference>
<dbReference type="PANTHER" id="PTHR33569">
    <property type="entry name" value="UREASE"/>
    <property type="match status" value="1"/>
</dbReference>
<dbReference type="PANTHER" id="PTHR33569:SF1">
    <property type="entry name" value="UREASE"/>
    <property type="match status" value="1"/>
</dbReference>
<dbReference type="Pfam" id="PF00547">
    <property type="entry name" value="Urease_gamma"/>
    <property type="match status" value="1"/>
</dbReference>
<dbReference type="PIRSF" id="PIRSF001223">
    <property type="entry name" value="Urease_gamma"/>
    <property type="match status" value="1"/>
</dbReference>
<dbReference type="SUPFAM" id="SSF54111">
    <property type="entry name" value="Urease, gamma-subunit"/>
    <property type="match status" value="1"/>
</dbReference>
<protein>
    <recommendedName>
        <fullName evidence="1">Urease subunit gamma</fullName>
        <ecNumber evidence="1">3.5.1.5</ecNumber>
    </recommendedName>
    <alternativeName>
        <fullName evidence="1">Urea amidohydrolase subunit gamma</fullName>
    </alternativeName>
</protein>
<gene>
    <name evidence="1" type="primary">ureA</name>
    <name type="ordered locus">Daci_1185</name>
</gene>
<organism>
    <name type="scientific">Delftia acidovorans (strain DSM 14801 / SPH-1)</name>
    <dbReference type="NCBI Taxonomy" id="398578"/>
    <lineage>
        <taxon>Bacteria</taxon>
        <taxon>Pseudomonadati</taxon>
        <taxon>Pseudomonadota</taxon>
        <taxon>Betaproteobacteria</taxon>
        <taxon>Burkholderiales</taxon>
        <taxon>Comamonadaceae</taxon>
        <taxon>Delftia</taxon>
    </lineage>
</organism>
<feature type="chain" id="PRO_1000199862" description="Urease subunit gamma">
    <location>
        <begin position="1"/>
        <end position="100"/>
    </location>
</feature>
<name>URE3_DELAS</name>